<comment type="function">
    <text evidence="2">Component of the ubiquinol-cytochrome c reductase complex (complex III or cytochrome b-c1 complex) that is part of the mitochondrial respiratory chain. The b-c1 complex mediates electron transfer from ubiquinol to cytochrome c. Contributes to the generation of a proton gradient across the mitochondrial membrane that is then used for ATP synthesis.</text>
</comment>
<comment type="cofactor">
    <cofactor evidence="2">
        <name>heme b</name>
        <dbReference type="ChEBI" id="CHEBI:60344"/>
    </cofactor>
    <text evidence="2">Binds 2 heme b groups non-covalently.</text>
</comment>
<comment type="subunit">
    <text evidence="2">The cytochrome bc1 complex contains 11 subunits: 3 respiratory subunits (MT-CYB, CYC1 and UQCRFS1), 2 core proteins (UQCRC1 and UQCRC2) and 6 low-molecular weight proteins (UQCRH/QCR6, UQCRB/QCR7, UQCRQ/QCR8, UQCR10/QCR9, UQCR11/QCR10 and a cleavage product of UQCRFS1). This cytochrome bc1 complex then forms a dimer.</text>
</comment>
<comment type="subcellular location">
    <subcellularLocation>
        <location evidence="2">Mitochondrion inner membrane</location>
        <topology evidence="2">Multi-pass membrane protein</topology>
    </subcellularLocation>
</comment>
<comment type="miscellaneous">
    <text evidence="1">Heme 1 (or BL or b562) is low-potential and absorbs at about 562 nm, and heme 2 (or BH or b566) is high-potential and absorbs at about 566 nm.</text>
</comment>
<comment type="similarity">
    <text evidence="3 4">Belongs to the cytochrome b family.</text>
</comment>
<comment type="caution">
    <text evidence="2">The full-length protein contains only eight transmembrane helices, not nine as predicted by bioinformatics tools.</text>
</comment>
<accession>Q35157</accession>
<geneLocation type="mitochondrion"/>
<gene>
    <name type="primary">MT-CYB</name>
    <name type="synonym">COB</name>
    <name type="synonym">CYTB</name>
    <name type="synonym">MTCYB</name>
</gene>
<dbReference type="EMBL" id="U07585">
    <property type="protein sequence ID" value="AAB88761.1"/>
    <property type="molecule type" value="Genomic_DNA"/>
</dbReference>
<dbReference type="SMR" id="Q35157"/>
<dbReference type="GO" id="GO:0005743">
    <property type="term" value="C:mitochondrial inner membrane"/>
    <property type="evidence" value="ECO:0007669"/>
    <property type="project" value="UniProtKB-SubCell"/>
</dbReference>
<dbReference type="GO" id="GO:0045275">
    <property type="term" value="C:respiratory chain complex III"/>
    <property type="evidence" value="ECO:0007669"/>
    <property type="project" value="InterPro"/>
</dbReference>
<dbReference type="GO" id="GO:0046872">
    <property type="term" value="F:metal ion binding"/>
    <property type="evidence" value="ECO:0007669"/>
    <property type="project" value="UniProtKB-KW"/>
</dbReference>
<dbReference type="GO" id="GO:0008121">
    <property type="term" value="F:ubiquinol-cytochrome-c reductase activity"/>
    <property type="evidence" value="ECO:0007669"/>
    <property type="project" value="InterPro"/>
</dbReference>
<dbReference type="GO" id="GO:0006122">
    <property type="term" value="P:mitochondrial electron transport, ubiquinol to cytochrome c"/>
    <property type="evidence" value="ECO:0007669"/>
    <property type="project" value="TreeGrafter"/>
</dbReference>
<dbReference type="CDD" id="cd00290">
    <property type="entry name" value="cytochrome_b_C"/>
    <property type="match status" value="1"/>
</dbReference>
<dbReference type="CDD" id="cd00284">
    <property type="entry name" value="Cytochrome_b_N"/>
    <property type="match status" value="1"/>
</dbReference>
<dbReference type="FunFam" id="1.20.810.10:FF:000002">
    <property type="entry name" value="Cytochrome b"/>
    <property type="match status" value="1"/>
</dbReference>
<dbReference type="Gene3D" id="1.20.810.10">
    <property type="entry name" value="Cytochrome Bc1 Complex, Chain C"/>
    <property type="match status" value="1"/>
</dbReference>
<dbReference type="InterPro" id="IPR005798">
    <property type="entry name" value="Cyt_b/b6_C"/>
</dbReference>
<dbReference type="InterPro" id="IPR036150">
    <property type="entry name" value="Cyt_b/b6_C_sf"/>
</dbReference>
<dbReference type="InterPro" id="IPR005797">
    <property type="entry name" value="Cyt_b/b6_N"/>
</dbReference>
<dbReference type="InterPro" id="IPR027387">
    <property type="entry name" value="Cytb/b6-like_sf"/>
</dbReference>
<dbReference type="InterPro" id="IPR030689">
    <property type="entry name" value="Cytochrome_b"/>
</dbReference>
<dbReference type="InterPro" id="IPR048260">
    <property type="entry name" value="Cytochrome_b_C_euk/bac"/>
</dbReference>
<dbReference type="InterPro" id="IPR048259">
    <property type="entry name" value="Cytochrome_b_N_euk/bac"/>
</dbReference>
<dbReference type="InterPro" id="IPR016174">
    <property type="entry name" value="Di-haem_cyt_TM"/>
</dbReference>
<dbReference type="PANTHER" id="PTHR19271">
    <property type="entry name" value="CYTOCHROME B"/>
    <property type="match status" value="1"/>
</dbReference>
<dbReference type="PANTHER" id="PTHR19271:SF16">
    <property type="entry name" value="CYTOCHROME B"/>
    <property type="match status" value="1"/>
</dbReference>
<dbReference type="Pfam" id="PF00032">
    <property type="entry name" value="Cytochrom_B_C"/>
    <property type="match status" value="1"/>
</dbReference>
<dbReference type="Pfam" id="PF00033">
    <property type="entry name" value="Cytochrome_B"/>
    <property type="match status" value="1"/>
</dbReference>
<dbReference type="PIRSF" id="PIRSF038885">
    <property type="entry name" value="COB"/>
    <property type="match status" value="1"/>
</dbReference>
<dbReference type="SUPFAM" id="SSF81648">
    <property type="entry name" value="a domain/subunit of cytochrome bc1 complex (Ubiquinol-cytochrome c reductase)"/>
    <property type="match status" value="1"/>
</dbReference>
<dbReference type="SUPFAM" id="SSF81342">
    <property type="entry name" value="Transmembrane di-heme cytochromes"/>
    <property type="match status" value="1"/>
</dbReference>
<dbReference type="PROSITE" id="PS51003">
    <property type="entry name" value="CYTB_CTER"/>
    <property type="match status" value="1"/>
</dbReference>
<dbReference type="PROSITE" id="PS51002">
    <property type="entry name" value="CYTB_NTER"/>
    <property type="match status" value="1"/>
</dbReference>
<name>CYB_NEOLO</name>
<evidence type="ECO:0000250" key="1"/>
<evidence type="ECO:0000250" key="2">
    <source>
        <dbReference type="UniProtKB" id="P00157"/>
    </source>
</evidence>
<evidence type="ECO:0000255" key="3">
    <source>
        <dbReference type="PROSITE-ProRule" id="PRU00967"/>
    </source>
</evidence>
<evidence type="ECO:0000255" key="4">
    <source>
        <dbReference type="PROSITE-ProRule" id="PRU00968"/>
    </source>
</evidence>
<feature type="chain" id="PRO_0000061270" description="Cytochrome b">
    <location>
        <begin position="1"/>
        <end position="381"/>
    </location>
</feature>
<feature type="transmembrane region" description="Helical" evidence="2">
    <location>
        <begin position="33"/>
        <end position="53"/>
    </location>
</feature>
<feature type="transmembrane region" description="Helical" evidence="2">
    <location>
        <begin position="77"/>
        <end position="98"/>
    </location>
</feature>
<feature type="transmembrane region" description="Helical" evidence="2">
    <location>
        <begin position="113"/>
        <end position="133"/>
    </location>
</feature>
<feature type="transmembrane region" description="Helical" evidence="2">
    <location>
        <begin position="178"/>
        <end position="198"/>
    </location>
</feature>
<feature type="transmembrane region" description="Helical" evidence="2">
    <location>
        <begin position="226"/>
        <end position="246"/>
    </location>
</feature>
<feature type="transmembrane region" description="Helical" evidence="2">
    <location>
        <begin position="288"/>
        <end position="308"/>
    </location>
</feature>
<feature type="transmembrane region" description="Helical" evidence="2">
    <location>
        <begin position="320"/>
        <end position="340"/>
    </location>
</feature>
<feature type="transmembrane region" description="Helical" evidence="2">
    <location>
        <begin position="347"/>
        <end position="367"/>
    </location>
</feature>
<feature type="binding site" description="axial binding residue" evidence="2">
    <location>
        <position position="83"/>
    </location>
    <ligand>
        <name>heme b</name>
        <dbReference type="ChEBI" id="CHEBI:60344"/>
        <label>b562</label>
    </ligand>
    <ligandPart>
        <name>Fe</name>
        <dbReference type="ChEBI" id="CHEBI:18248"/>
    </ligandPart>
</feature>
<feature type="binding site" description="axial binding residue" evidence="2">
    <location>
        <position position="97"/>
    </location>
    <ligand>
        <name>heme b</name>
        <dbReference type="ChEBI" id="CHEBI:60344"/>
        <label>b566</label>
    </ligand>
    <ligandPart>
        <name>Fe</name>
        <dbReference type="ChEBI" id="CHEBI:18248"/>
    </ligandPart>
</feature>
<feature type="binding site" description="axial binding residue" evidence="2">
    <location>
        <position position="182"/>
    </location>
    <ligand>
        <name>heme b</name>
        <dbReference type="ChEBI" id="CHEBI:60344"/>
        <label>b562</label>
    </ligand>
    <ligandPart>
        <name>Fe</name>
        <dbReference type="ChEBI" id="CHEBI:18248"/>
    </ligandPart>
</feature>
<feature type="binding site" description="axial binding residue" evidence="2">
    <location>
        <position position="196"/>
    </location>
    <ligand>
        <name>heme b</name>
        <dbReference type="ChEBI" id="CHEBI:60344"/>
        <label>b566</label>
    </ligand>
    <ligandPart>
        <name>Fe</name>
        <dbReference type="ChEBI" id="CHEBI:18248"/>
    </ligandPart>
</feature>
<feature type="binding site" evidence="2">
    <location>
        <position position="201"/>
    </location>
    <ligand>
        <name>a ubiquinone</name>
        <dbReference type="ChEBI" id="CHEBI:16389"/>
    </ligand>
</feature>
<protein>
    <recommendedName>
        <fullName>Cytochrome b</fullName>
    </recommendedName>
    <alternativeName>
        <fullName>Complex III subunit 3</fullName>
    </alternativeName>
    <alternativeName>
        <fullName>Complex III subunit III</fullName>
    </alternativeName>
    <alternativeName>
        <fullName>Cytochrome b-c1 complex subunit 3</fullName>
    </alternativeName>
    <alternativeName>
        <fullName>Ubiquinol-cytochrome-c reductase complex cytochrome b subunit</fullName>
    </alternativeName>
</protein>
<reference key="1">
    <citation type="journal article" date="1994" name="J. Mammal. Evol.">
        <title>Phylogenetic structure of the marsupial family Dasyuridae based on cytochrome-b DNA sequences.</title>
        <authorList>
            <person name="Krajewski C."/>
            <person name="Painter J."/>
            <person name="Buckley L."/>
            <person name="Westerman M."/>
        </authorList>
    </citation>
    <scope>NUCLEOTIDE SEQUENCE [GENOMIC DNA]</scope>
</reference>
<proteinExistence type="inferred from homology"/>
<keyword id="KW-0249">Electron transport</keyword>
<keyword id="KW-0349">Heme</keyword>
<keyword id="KW-0408">Iron</keyword>
<keyword id="KW-0472">Membrane</keyword>
<keyword id="KW-0479">Metal-binding</keyword>
<keyword id="KW-0496">Mitochondrion</keyword>
<keyword id="KW-0999">Mitochondrion inner membrane</keyword>
<keyword id="KW-0679">Respiratory chain</keyword>
<keyword id="KW-0812">Transmembrane</keyword>
<keyword id="KW-1133">Transmembrane helix</keyword>
<keyword id="KW-0813">Transport</keyword>
<keyword id="KW-0830">Ubiquinone</keyword>
<organism>
    <name type="scientific">Neophascogale lorentzii</name>
    <name type="common">Long-clawed marsupial mouse</name>
    <name type="synonym">Speckled dasyure</name>
    <dbReference type="NCBI Taxonomy" id="32551"/>
    <lineage>
        <taxon>Eukaryota</taxon>
        <taxon>Metazoa</taxon>
        <taxon>Chordata</taxon>
        <taxon>Craniata</taxon>
        <taxon>Vertebrata</taxon>
        <taxon>Euteleostomi</taxon>
        <taxon>Mammalia</taxon>
        <taxon>Metatheria</taxon>
        <taxon>Dasyuromorphia</taxon>
        <taxon>Dasyuridae</taxon>
        <taxon>Neophascogale</taxon>
    </lineage>
</organism>
<sequence>MINLRKTHPLLKIINHSFIDLPTPSNISAWWNFGSLLGVCLIIQILTGLFLAMHYTSDTLTAFTSVAHICRDVNHGWLLRNLHANGASMFFMCLFLHVGRGIYYGSYLYKETWNIGVILLLTVMATAFVGYVLPWGQMSFWGATVITNLLSAIPYIGTTLAEWMWGGFAVDKATLTRFFAFHFILPFIITALAIVHLLFLHETGSNNPSGINPDADKIPFHPYYTIKDALGLMLLLLVLLLLALFSPDLLGDPDNFSPANPLNTPPHIKPEWYFLFAYAILRSIPNKLGGVLALLASILILLIIPLLHTANQRSMMFRPISQTLFWILTANLITLTWIGGQPVEQPFIIIGQLASMLYFLLILVLMPLAGLLENYMLKPKW</sequence>